<name>UREF_STAA2</name>
<accession>A6U416</accession>
<organism>
    <name type="scientific">Staphylococcus aureus (strain JH1)</name>
    <dbReference type="NCBI Taxonomy" id="359787"/>
    <lineage>
        <taxon>Bacteria</taxon>
        <taxon>Bacillati</taxon>
        <taxon>Bacillota</taxon>
        <taxon>Bacilli</taxon>
        <taxon>Bacillales</taxon>
        <taxon>Staphylococcaceae</taxon>
        <taxon>Staphylococcus</taxon>
    </lineage>
</organism>
<gene>
    <name evidence="1" type="primary">ureF</name>
    <name type="ordered locus">SaurJH1_2359</name>
</gene>
<keyword id="KW-0143">Chaperone</keyword>
<keyword id="KW-0963">Cytoplasm</keyword>
<keyword id="KW-0996">Nickel insertion</keyword>
<dbReference type="EMBL" id="CP000736">
    <property type="protein sequence ID" value="ABR53184.1"/>
    <property type="molecule type" value="Genomic_DNA"/>
</dbReference>
<dbReference type="SMR" id="A6U416"/>
<dbReference type="KEGG" id="sah:SaurJH1_2359"/>
<dbReference type="HOGENOM" id="CLU_049215_4_2_9"/>
<dbReference type="GO" id="GO:0005737">
    <property type="term" value="C:cytoplasm"/>
    <property type="evidence" value="ECO:0007669"/>
    <property type="project" value="UniProtKB-SubCell"/>
</dbReference>
<dbReference type="GO" id="GO:0016151">
    <property type="term" value="F:nickel cation binding"/>
    <property type="evidence" value="ECO:0007669"/>
    <property type="project" value="UniProtKB-UniRule"/>
</dbReference>
<dbReference type="Gene3D" id="1.10.4190.10">
    <property type="entry name" value="Urease accessory protein UreF"/>
    <property type="match status" value="1"/>
</dbReference>
<dbReference type="HAMAP" id="MF_01385">
    <property type="entry name" value="UreF"/>
    <property type="match status" value="1"/>
</dbReference>
<dbReference type="InterPro" id="IPR002639">
    <property type="entry name" value="UreF"/>
</dbReference>
<dbReference type="InterPro" id="IPR038277">
    <property type="entry name" value="UreF_sf"/>
</dbReference>
<dbReference type="PANTHER" id="PTHR33620">
    <property type="entry name" value="UREASE ACCESSORY PROTEIN F"/>
    <property type="match status" value="1"/>
</dbReference>
<dbReference type="PANTHER" id="PTHR33620:SF1">
    <property type="entry name" value="UREASE ACCESSORY PROTEIN F"/>
    <property type="match status" value="1"/>
</dbReference>
<dbReference type="Pfam" id="PF01730">
    <property type="entry name" value="UreF"/>
    <property type="match status" value="1"/>
</dbReference>
<dbReference type="PIRSF" id="PIRSF009467">
    <property type="entry name" value="Ureas_acces_UreF"/>
    <property type="match status" value="1"/>
</dbReference>
<feature type="chain" id="PRO_0000344181" description="Urease accessory protein UreF">
    <location>
        <begin position="1"/>
        <end position="229"/>
    </location>
</feature>
<sequence>MIDHTHLRLFQFCDSQFPTGAFSHSFGLETYIQRNIIHDDHTFIAWLKMFLQEQLTYSDGLAMRLVYDALENDDTQKVLHIDKLMFVQNLPKETRVGAKQMGTRMVKLALELYNSPWIAWYHQQMQDKKAKLNPAICFTMLGHHLGVDIETIIDYYLYQNVSSLTQNAVRAIPLGQTAGQKIVTHMIPYIEETRKQIFELKEADFGMTAPGLELNQMAHENVNVRIFIS</sequence>
<comment type="function">
    <text evidence="1">Required for maturation of urease via the functional incorporation of the urease nickel metallocenter.</text>
</comment>
<comment type="subunit">
    <text evidence="1">UreD, UreF and UreG form a complex that acts as a GTP-hydrolysis-dependent molecular chaperone, activating the urease apoprotein by helping to assemble the nickel containing metallocenter of UreC. The UreE protein probably delivers the nickel.</text>
</comment>
<comment type="subcellular location">
    <subcellularLocation>
        <location evidence="1">Cytoplasm</location>
    </subcellularLocation>
</comment>
<comment type="similarity">
    <text evidence="1">Belongs to the UreF family.</text>
</comment>
<proteinExistence type="inferred from homology"/>
<reference key="1">
    <citation type="submission" date="2007-06" db="EMBL/GenBank/DDBJ databases">
        <title>Complete sequence of chromosome of Staphylococcus aureus subsp. aureus JH1.</title>
        <authorList>
            <consortium name="US DOE Joint Genome Institute"/>
            <person name="Copeland A."/>
            <person name="Lucas S."/>
            <person name="Lapidus A."/>
            <person name="Barry K."/>
            <person name="Detter J.C."/>
            <person name="Glavina del Rio T."/>
            <person name="Hammon N."/>
            <person name="Israni S."/>
            <person name="Dalin E."/>
            <person name="Tice H."/>
            <person name="Pitluck S."/>
            <person name="Chain P."/>
            <person name="Malfatti S."/>
            <person name="Shin M."/>
            <person name="Vergez L."/>
            <person name="Schmutz J."/>
            <person name="Larimer F."/>
            <person name="Land M."/>
            <person name="Hauser L."/>
            <person name="Kyrpides N."/>
            <person name="Ivanova N."/>
            <person name="Tomasz A."/>
            <person name="Richardson P."/>
        </authorList>
    </citation>
    <scope>NUCLEOTIDE SEQUENCE [LARGE SCALE GENOMIC DNA]</scope>
    <source>
        <strain>JH1</strain>
    </source>
</reference>
<evidence type="ECO:0000255" key="1">
    <source>
        <dbReference type="HAMAP-Rule" id="MF_01385"/>
    </source>
</evidence>
<protein>
    <recommendedName>
        <fullName evidence="1">Urease accessory protein UreF</fullName>
    </recommendedName>
</protein>